<organism evidence="13">
    <name type="scientific">Caenorhabditis elegans</name>
    <dbReference type="NCBI Taxonomy" id="6239"/>
    <lineage>
        <taxon>Eukaryota</taxon>
        <taxon>Metazoa</taxon>
        <taxon>Ecdysozoa</taxon>
        <taxon>Nematoda</taxon>
        <taxon>Chromadorea</taxon>
        <taxon>Rhabditida</taxon>
        <taxon>Rhabditina</taxon>
        <taxon>Rhabditomorpha</taxon>
        <taxon>Rhabditoidea</taxon>
        <taxon>Rhabditidae</taxon>
        <taxon>Peloderinae</taxon>
        <taxon>Caenorhabditis</taxon>
    </lineage>
</organism>
<proteinExistence type="evidence at protein level"/>
<reference evidence="11 12" key="1">
    <citation type="journal article" date="2000" name="Dev. Biol.">
        <title>The MADS-Box factor CeMEF2 is not essential for Caenorhabditis elegans myogenesis and development.</title>
        <authorList>
            <person name="Dichoso D."/>
            <person name="Brodigan T."/>
            <person name="Chwoe K.Y."/>
            <person name="Lee J.S."/>
            <person name="Llacer R."/>
            <person name="Park M."/>
            <person name="Corsi A.K."/>
            <person name="Kostas S.A."/>
            <person name="Fire A."/>
            <person name="Ahnn J."/>
            <person name="Krause M."/>
        </authorList>
    </citation>
    <scope>NUCLEOTIDE SEQUENCE [GENOMIC DNA / MRNA]</scope>
    <scope>FUNCTION</scope>
    <scope>DEVELOPMENTAL STAGE</scope>
</reference>
<reference evidence="13" key="2">
    <citation type="journal article" date="1998" name="Science">
        <title>Genome sequence of the nematode C. elegans: a platform for investigating biology.</title>
        <authorList>
            <consortium name="The C. elegans sequencing consortium"/>
        </authorList>
    </citation>
    <scope>NUCLEOTIDE SEQUENCE [LARGE SCALE GENOMIC DNA]</scope>
    <source>
        <strain evidence="13">Bristol N2</strain>
    </source>
</reference>
<reference evidence="10" key="3">
    <citation type="journal article" date="2002" name="Biochem. Biophys. Res. Commun.">
        <title>Characterization of CeHDA-7, a class II histone deacetylase interacting with MEF-2 in Caenorhabditis elegans.</title>
        <authorList>
            <person name="Choi K.Y."/>
            <person name="Ji Y.J."/>
            <person name="Jee C."/>
            <person name="Kim do H."/>
            <person name="Ahnn J."/>
        </authorList>
    </citation>
    <scope>INTERACTION WITH HDA-4</scope>
</reference>
<reference evidence="10" key="4">
    <citation type="journal article" date="2007" name="EMBO J.">
        <title>KIN-29 SIK regulates chemoreceptor gene expression via an MEF2 transcription factor and a class II HDAC.</title>
        <authorList>
            <person name="van der Linden A.M."/>
            <person name="Nolan K.M."/>
            <person name="Sengupta P."/>
        </authorList>
    </citation>
    <scope>FUNCTION</scope>
    <scope>MUTAGENESIS OF THR-20 AND LEU-38</scope>
</reference>
<reference key="5">
    <citation type="journal article" date="2008" name="Cell">
        <title>The microRNA miR-1 regulates a MEF-2-dependent retrograde signal at neuromuscular junctions.</title>
        <authorList>
            <person name="Simon D.J."/>
            <person name="Madison J.M."/>
            <person name="Conery A.L."/>
            <person name="Thompson-Peer K.L."/>
            <person name="Soskis M."/>
            <person name="Ruvkun G.B."/>
            <person name="Kaplan J.M."/>
            <person name="Kim J.K."/>
        </authorList>
    </citation>
    <scope>FUNCTION</scope>
    <scope>INDUCTION BY MIR-1</scope>
</reference>
<reference evidence="10" key="6">
    <citation type="journal article" date="2008" name="Genetics">
        <title>The EGL-4 PKG acts with KIN-29 salt-inducible kinase and protein kinase A to regulate chemoreceptor gene expression and sensory behaviors in Caenorhabditis elegans.</title>
        <authorList>
            <person name="van der Linden A.M."/>
            <person name="Wiener S."/>
            <person name="You Y.J."/>
            <person name="Kim K."/>
            <person name="Avery L."/>
            <person name="Sengupta P."/>
        </authorList>
    </citation>
    <scope>FUNCTION</scope>
</reference>
<reference evidence="10" key="7">
    <citation type="journal article" date="2016" name="PLoS Genet.">
        <title>Cell-Autonomous and Non-Cell-Autonomous Regulation of a Feeding State-Dependent Chemoreceptor Gene via MEF-2 and bHLH Transcription Factors.</title>
        <authorList>
            <person name="Gruner M."/>
            <person name="Grubbs J."/>
            <person name="McDonagh A."/>
            <person name="Valdes D."/>
            <person name="Winbush A."/>
            <person name="van der Linden A.M."/>
        </authorList>
    </citation>
    <scope>FUNCTION</scope>
    <scope>INDUCTION</scope>
</reference>
<feature type="chain" id="PRO_0000453925" description="MEF2 transcription factor homolog">
    <location>
        <begin position="1"/>
        <end position="340"/>
    </location>
</feature>
<feature type="domain" description="MADS-box" evidence="1">
    <location>
        <begin position="1"/>
        <end position="61"/>
    </location>
</feature>
<feature type="region of interest" description="Disordered" evidence="2">
    <location>
        <begin position="90"/>
        <end position="112"/>
    </location>
</feature>
<feature type="region of interest" description="Disordered" evidence="2">
    <location>
        <begin position="193"/>
        <end position="217"/>
    </location>
</feature>
<feature type="region of interest" description="Disordered" evidence="2">
    <location>
        <begin position="258"/>
        <end position="283"/>
    </location>
</feature>
<feature type="region of interest" description="Disordered" evidence="2">
    <location>
        <begin position="312"/>
        <end position="340"/>
    </location>
</feature>
<feature type="compositionally biased region" description="Low complexity" evidence="2">
    <location>
        <begin position="200"/>
        <end position="211"/>
    </location>
</feature>
<feature type="compositionally biased region" description="Polar residues" evidence="2">
    <location>
        <begin position="258"/>
        <end position="268"/>
    </location>
</feature>
<feature type="compositionally biased region" description="Low complexity" evidence="2">
    <location>
        <begin position="269"/>
        <end position="283"/>
    </location>
</feature>
<feature type="compositionally biased region" description="Basic and acidic residues" evidence="2">
    <location>
        <begin position="318"/>
        <end position="332"/>
    </location>
</feature>
<feature type="mutagenesis site" description="In oy65; Suppresses several phenotypes in a Ser/Thr kinase kin-29 mutant background; dauer pheromone hypersensitivity, reduced chemoreceptor gene expression and also decreased body length." evidence="5">
    <original>T</original>
    <variation>I</variation>
    <location>
        <position position="20"/>
    </location>
</feature>
<feature type="mutagenesis site" description="In oy63; Suppresses several phenotypes in a Ser/Thr kinase kin-29 mutant background; dauer pheromone hypersensitivity, reduced chemoreceptor gene expression and also decreased body length." evidence="5">
    <original>L</original>
    <variation>F</variation>
    <location>
        <position position="38"/>
    </location>
</feature>
<feature type="sequence conflict" description="In Ref. 1; AAA79336/AAA79337." evidence="10" ref="1">
    <original>F</original>
    <variation>I</variation>
    <location>
        <position position="216"/>
    </location>
</feature>
<feature type="sequence conflict" description="In Ref. 1; AAA79336/AAA79337." evidence="10" ref="1">
    <original>C</original>
    <variation>G</variation>
    <location>
        <position position="239"/>
    </location>
</feature>
<gene>
    <name evidence="14" type="primary">mef-2</name>
    <name evidence="9" type="synonym">CeMef-2</name>
    <name evidence="14" type="ORF">W10D5.1</name>
</gene>
<keyword id="KW-0238">DNA-binding</keyword>
<keyword id="KW-0539">Nucleus</keyword>
<keyword id="KW-1185">Reference proteome</keyword>
<keyword id="KW-0804">Transcription</keyword>
<keyword id="KW-0805">Transcription regulation</keyword>
<evidence type="ECO:0000255" key="1">
    <source>
        <dbReference type="PROSITE-ProRule" id="PRU00251"/>
    </source>
</evidence>
<evidence type="ECO:0000256" key="2">
    <source>
        <dbReference type="SAM" id="MobiDB-lite"/>
    </source>
</evidence>
<evidence type="ECO:0000269" key="3">
    <source>
    </source>
</evidence>
<evidence type="ECO:0000269" key="4">
    <source>
    </source>
</evidence>
<evidence type="ECO:0000269" key="5">
    <source>
    </source>
</evidence>
<evidence type="ECO:0000269" key="6">
    <source>
    </source>
</evidence>
<evidence type="ECO:0000269" key="7">
    <source>
    </source>
</evidence>
<evidence type="ECO:0000269" key="8">
    <source>
    </source>
</evidence>
<evidence type="ECO:0000303" key="9">
    <source>
    </source>
</evidence>
<evidence type="ECO:0000305" key="10"/>
<evidence type="ECO:0000312" key="11">
    <source>
        <dbReference type="EMBL" id="AAA79336.1"/>
    </source>
</evidence>
<evidence type="ECO:0000312" key="12">
    <source>
        <dbReference type="EMBL" id="AAA79337.1"/>
    </source>
</evidence>
<evidence type="ECO:0000312" key="13">
    <source>
        <dbReference type="Proteomes" id="UP000001940"/>
    </source>
</evidence>
<evidence type="ECO:0000312" key="14">
    <source>
        <dbReference type="WormBase" id="W10D5.1"/>
    </source>
</evidence>
<comment type="function">
    <text evidence="3 5 6 7 8">Transcription regulator (PubMed:17170704, PubMed:27487365). Binds specifically to the MEF2 element, 5'-[TC]TA[AT][AT][AT][AT]TA[AG]-3' in the regulatory elements of target genes, such as chemoreceptors str-1 and srh-234 (PubMed:10882527, PubMed:17170704, PubMed:27487365). Involved in transduction of sensory signals, together with egl-4, kin-29 and hda-4; binding to histone deacetylase hda-4 enables negative modulation of chemoreceptor gene expression in chemosensory neurons (PubMed:17170704, PubMed:18832350). In response to starvation, negatively modulates expression of chemoreceptor srh-234 in ADL sensory neurons, acting in concert with basic helix-loop-helix (bHLH) transcription factors (PubMed:27487365). Plays a role in regulating muscle sensitivity to acetylcholine (ACh) and the magnitude of presynaptic ACh release via a retrograde signal, perhaps by indirectly decreasing Ras-related protein Rab-3 activity (PubMed:18510933).</text>
</comment>
<comment type="subunit">
    <text evidence="4">Interacts with histone deacetylase hda-4 isoform b.</text>
</comment>
<comment type="subcellular location">
    <subcellularLocation>
        <location evidence="1">Nucleus</location>
    </subcellularLocation>
</comment>
<comment type="developmental stage">
    <text evidence="3">Expressed broadly throughout most of development.</text>
</comment>
<comment type="induction">
    <text evidence="6 8">Down-regulated by microRNA mir-1 (PubMed:18510933). Up-regulated in many head neurons during prolonged starvation (PubMed:27487365).</text>
</comment>
<comment type="similarity">
    <text evidence="10">Belongs to the MEF2 family.</text>
</comment>
<accession>Q9U325</accession>
<accession>G5EGT3</accession>
<name>MEF2_CAEEL</name>
<sequence>MGRKKIQITRIQDERNRQVTFTKRKFGLMKKAYELSVLCDCEIALIVFNSTNKLFQYASTDMDKVLLKYTEYNEPHESRTNNDIMEALNRKEGNQGGGNSDDESPGPSTSPVIQITMPAVVNGHSSNNSVASAASASAAAVAAAAAAVAAVEGTSSGAAAAAAALQASNAQRHHNLNLYQNLIFNPNYTRHLNQRNDPLSSTSVAPSSSSSKHLDFPPSTSFAYDTSRLHPIAAADADCDLVPSSRAAADQNIWSSALQQRPVSQPAPSISNSSTNGISNGTSSLLSPNVSSLNGHSVLDLGGPNLPYKLDPNTYVKMEPHSPPEKRPRITTEWRPQQLT</sequence>
<dbReference type="EMBL" id="U36198">
    <property type="protein sequence ID" value="AAA79336.1"/>
    <property type="molecule type" value="mRNA"/>
</dbReference>
<dbReference type="EMBL" id="U36199">
    <property type="protein sequence ID" value="AAA79337.1"/>
    <property type="molecule type" value="Genomic_DNA"/>
</dbReference>
<dbReference type="EMBL" id="BX284601">
    <property type="protein sequence ID" value="CAB61037.1"/>
    <property type="molecule type" value="Genomic_DNA"/>
</dbReference>
<dbReference type="RefSeq" id="NP_492441.1">
    <property type="nucleotide sequence ID" value="NM_060040.7"/>
</dbReference>
<dbReference type="SMR" id="Q9U325"/>
<dbReference type="FunCoup" id="Q9U325">
    <property type="interactions" value="1491"/>
</dbReference>
<dbReference type="STRING" id="6239.W10D5.1.1"/>
<dbReference type="PaxDb" id="6239-W10D5.1"/>
<dbReference type="EnsemblMetazoa" id="W10D5.1.1">
    <property type="protein sequence ID" value="W10D5.1.1"/>
    <property type="gene ID" value="WBGene00003182"/>
</dbReference>
<dbReference type="GeneID" id="172732"/>
<dbReference type="KEGG" id="cel:CELE_W10D5.1"/>
<dbReference type="AGR" id="WB:WBGene00003182"/>
<dbReference type="CTD" id="172732"/>
<dbReference type="WormBase" id="W10D5.1">
    <property type="protein sequence ID" value="CE25156"/>
    <property type="gene ID" value="WBGene00003182"/>
    <property type="gene designation" value="mef-2"/>
</dbReference>
<dbReference type="eggNOG" id="KOG0014">
    <property type="taxonomic scope" value="Eukaryota"/>
</dbReference>
<dbReference type="GeneTree" id="ENSGT00940000169350"/>
<dbReference type="HOGENOM" id="CLU_855856_0_0_1"/>
<dbReference type="InParanoid" id="Q9U325"/>
<dbReference type="OMA" id="DCELVAP"/>
<dbReference type="OrthoDB" id="1898716at2759"/>
<dbReference type="Reactome" id="R-CEL-525793">
    <property type="pathway name" value="Myogenesis"/>
</dbReference>
<dbReference type="PRO" id="PR:Q9U325"/>
<dbReference type="Proteomes" id="UP000001940">
    <property type="component" value="Chromosome I"/>
</dbReference>
<dbReference type="Bgee" id="WBGene00003182">
    <property type="expression patterns" value="Expressed in larva and 3 other cell types or tissues"/>
</dbReference>
<dbReference type="GO" id="GO:0005634">
    <property type="term" value="C:nucleus"/>
    <property type="evidence" value="ECO:0000314"/>
    <property type="project" value="WormBase"/>
</dbReference>
<dbReference type="GO" id="GO:0000981">
    <property type="term" value="F:DNA-binding transcription factor activity, RNA polymerase II-specific"/>
    <property type="evidence" value="ECO:0000318"/>
    <property type="project" value="GO_Central"/>
</dbReference>
<dbReference type="GO" id="GO:0042826">
    <property type="term" value="F:histone deacetylase binding"/>
    <property type="evidence" value="ECO:0000353"/>
    <property type="project" value="WormBase"/>
</dbReference>
<dbReference type="GO" id="GO:0046983">
    <property type="term" value="F:protein dimerization activity"/>
    <property type="evidence" value="ECO:0007669"/>
    <property type="project" value="InterPro"/>
</dbReference>
<dbReference type="GO" id="GO:0000978">
    <property type="term" value="F:RNA polymerase II cis-regulatory region sequence-specific DNA binding"/>
    <property type="evidence" value="ECO:0000315"/>
    <property type="project" value="UniProtKB"/>
</dbReference>
<dbReference type="GO" id="GO:0043565">
    <property type="term" value="F:sequence-specific DNA binding"/>
    <property type="evidence" value="ECO:0000314"/>
    <property type="project" value="WormBase"/>
</dbReference>
<dbReference type="GO" id="GO:0030154">
    <property type="term" value="P:cell differentiation"/>
    <property type="evidence" value="ECO:0000318"/>
    <property type="project" value="GO_Central"/>
</dbReference>
<dbReference type="GO" id="GO:0000122">
    <property type="term" value="P:negative regulation of transcription by RNA polymerase II"/>
    <property type="evidence" value="ECO:0000315"/>
    <property type="project" value="UniProtKB"/>
</dbReference>
<dbReference type="GO" id="GO:0045944">
    <property type="term" value="P:positive regulation of transcription by RNA polymerase II"/>
    <property type="evidence" value="ECO:0000315"/>
    <property type="project" value="WormBase"/>
</dbReference>
<dbReference type="GO" id="GO:0007168">
    <property type="term" value="P:receptor guanylyl cyclase signaling pathway"/>
    <property type="evidence" value="ECO:0000315"/>
    <property type="project" value="UniProtKB"/>
</dbReference>
<dbReference type="GO" id="GO:0014056">
    <property type="term" value="P:regulation of acetylcholine secretion, neurotransmission"/>
    <property type="evidence" value="ECO:0000316"/>
    <property type="project" value="WormBase"/>
</dbReference>
<dbReference type="GO" id="GO:0042594">
    <property type="term" value="P:response to starvation"/>
    <property type="evidence" value="ECO:0000315"/>
    <property type="project" value="UniProtKB"/>
</dbReference>
<dbReference type="GO" id="GO:0007165">
    <property type="term" value="P:signal transduction"/>
    <property type="evidence" value="ECO:0000315"/>
    <property type="project" value="UniProtKB"/>
</dbReference>
<dbReference type="CDD" id="cd00265">
    <property type="entry name" value="MADS_MEF2_like"/>
    <property type="match status" value="1"/>
</dbReference>
<dbReference type="FunFam" id="3.40.1810.10:FF:000001">
    <property type="entry name" value="Myocyte-specific enhancer factor 2A homolog"/>
    <property type="match status" value="1"/>
</dbReference>
<dbReference type="Gene3D" id="3.40.1810.10">
    <property type="entry name" value="Transcription factor, MADS-box"/>
    <property type="match status" value="1"/>
</dbReference>
<dbReference type="InterPro" id="IPR033896">
    <property type="entry name" value="MEF2-like_N"/>
</dbReference>
<dbReference type="InterPro" id="IPR002100">
    <property type="entry name" value="TF_MADSbox"/>
</dbReference>
<dbReference type="InterPro" id="IPR036879">
    <property type="entry name" value="TF_MADSbox_sf"/>
</dbReference>
<dbReference type="PANTHER" id="PTHR11945">
    <property type="entry name" value="MADS BOX PROTEIN"/>
    <property type="match status" value="1"/>
</dbReference>
<dbReference type="PANTHER" id="PTHR11945:SF534">
    <property type="entry name" value="MYOCYTE-SPECIFIC ENHANCER FACTOR 2"/>
    <property type="match status" value="1"/>
</dbReference>
<dbReference type="Pfam" id="PF00319">
    <property type="entry name" value="SRF-TF"/>
    <property type="match status" value="1"/>
</dbReference>
<dbReference type="PRINTS" id="PR00404">
    <property type="entry name" value="MADSDOMAIN"/>
</dbReference>
<dbReference type="SMART" id="SM00432">
    <property type="entry name" value="MADS"/>
    <property type="match status" value="1"/>
</dbReference>
<dbReference type="SUPFAM" id="SSF55455">
    <property type="entry name" value="SRF-like"/>
    <property type="match status" value="1"/>
</dbReference>
<dbReference type="PROSITE" id="PS00350">
    <property type="entry name" value="MADS_BOX_1"/>
    <property type="match status" value="1"/>
</dbReference>
<dbReference type="PROSITE" id="PS50066">
    <property type="entry name" value="MADS_BOX_2"/>
    <property type="match status" value="1"/>
</dbReference>
<protein>
    <recommendedName>
        <fullName evidence="14">MEF2 transcription factor homolog</fullName>
    </recommendedName>
</protein>